<evidence type="ECO:0000250" key="1">
    <source>
        <dbReference type="UniProtKB" id="P10997"/>
    </source>
</evidence>
<evidence type="ECO:0000255" key="2"/>
<evidence type="ECO:0000269" key="3">
    <source>
    </source>
</evidence>
<evidence type="ECO:0000269" key="4">
    <source>
    </source>
</evidence>
<evidence type="ECO:0000269" key="5">
    <source>
    </source>
</evidence>
<evidence type="ECO:0000269" key="6">
    <source>
    </source>
</evidence>
<evidence type="ECO:0000303" key="7">
    <source>
    </source>
</evidence>
<evidence type="ECO:0000303" key="8">
    <source>
    </source>
</evidence>
<evidence type="ECO:0000303" key="9">
    <source>
    </source>
</evidence>
<evidence type="ECO:0000305" key="10"/>
<evidence type="ECO:0000312" key="11">
    <source>
        <dbReference type="RGD" id="2854"/>
    </source>
</evidence>
<evidence type="ECO:0007744" key="12">
    <source>
        <dbReference type="PDB" id="7TYF"/>
    </source>
</evidence>
<evidence type="ECO:0007744" key="13">
    <source>
        <dbReference type="PDB" id="7TYI"/>
    </source>
</evidence>
<evidence type="ECO:0007744" key="14">
    <source>
        <dbReference type="PDB" id="7TYL"/>
    </source>
</evidence>
<evidence type="ECO:0007744" key="15">
    <source>
        <dbReference type="PDB" id="7TYX"/>
    </source>
</evidence>
<evidence type="ECO:0007744" key="16">
    <source>
        <dbReference type="PDB" id="7TZF"/>
    </source>
</evidence>
<evidence type="ECO:0007829" key="17">
    <source>
        <dbReference type="PDB" id="7TYF"/>
    </source>
</evidence>
<evidence type="ECO:0007829" key="18">
    <source>
        <dbReference type="PDB" id="7TYX"/>
    </source>
</evidence>
<evidence type="ECO:0007829" key="19">
    <source>
        <dbReference type="PDB" id="7TZF"/>
    </source>
</evidence>
<keyword id="KW-0002">3D-structure</keyword>
<keyword id="KW-0027">Amidation</keyword>
<keyword id="KW-0034">Amyloid</keyword>
<keyword id="KW-0165">Cleavage on pair of basic residues</keyword>
<keyword id="KW-0903">Direct protein sequencing</keyword>
<keyword id="KW-1015">Disulfide bond</keyword>
<keyword id="KW-0372">Hormone</keyword>
<keyword id="KW-1185">Reference proteome</keyword>
<keyword id="KW-0964">Secreted</keyword>
<keyword id="KW-0732">Signal</keyword>
<organism>
    <name type="scientific">Rattus norvegicus</name>
    <name type="common">Rat</name>
    <dbReference type="NCBI Taxonomy" id="10116"/>
    <lineage>
        <taxon>Eukaryota</taxon>
        <taxon>Metazoa</taxon>
        <taxon>Chordata</taxon>
        <taxon>Craniata</taxon>
        <taxon>Vertebrata</taxon>
        <taxon>Euteleostomi</taxon>
        <taxon>Mammalia</taxon>
        <taxon>Eutheria</taxon>
        <taxon>Euarchontoglires</taxon>
        <taxon>Glires</taxon>
        <taxon>Rodentia</taxon>
        <taxon>Myomorpha</taxon>
        <taxon>Muroidea</taxon>
        <taxon>Muridae</taxon>
        <taxon>Murinae</taxon>
        <taxon>Rattus</taxon>
    </lineage>
</organism>
<dbReference type="EMBL" id="M25390">
    <property type="protein sequence ID" value="AAA41359.1"/>
    <property type="molecule type" value="mRNA"/>
</dbReference>
<dbReference type="EMBL" id="J04544">
    <property type="protein sequence ID" value="AAA40730.1"/>
    <property type="molecule type" value="mRNA"/>
</dbReference>
<dbReference type="EMBL" id="X52820">
    <property type="protein sequence ID" value="CAA37003.1"/>
    <property type="molecule type" value="Genomic_DNA"/>
</dbReference>
<dbReference type="EMBL" id="X52821">
    <property type="protein sequence ID" value="CAA37003.1"/>
    <property type="status" value="JOINED"/>
    <property type="molecule type" value="Genomic_DNA"/>
</dbReference>
<dbReference type="PIR" id="S13566">
    <property type="entry name" value="TCRTIA"/>
</dbReference>
<dbReference type="RefSeq" id="NP_036718.1">
    <property type="nucleotide sequence ID" value="NM_012586.3"/>
</dbReference>
<dbReference type="RefSeq" id="XP_006237676.1">
    <property type="nucleotide sequence ID" value="XM_006237614.3"/>
</dbReference>
<dbReference type="PDB" id="2KJ7">
    <property type="method" value="NMR"/>
    <property type="chains" value="A=38-74"/>
</dbReference>
<dbReference type="PDB" id="7TYF">
    <property type="method" value="EM"/>
    <property type="resolution" value="2.20 A"/>
    <property type="chains" value="P=38-74"/>
</dbReference>
<dbReference type="PDB" id="7TYI">
    <property type="method" value="EM"/>
    <property type="resolution" value="3.30 A"/>
    <property type="chains" value="P=38-74"/>
</dbReference>
<dbReference type="PDB" id="7TYL">
    <property type="method" value="EM"/>
    <property type="resolution" value="3.30 A"/>
    <property type="chains" value="P=38-74"/>
</dbReference>
<dbReference type="PDB" id="7TYX">
    <property type="method" value="EM"/>
    <property type="resolution" value="2.55 A"/>
    <property type="chains" value="P=38-74"/>
</dbReference>
<dbReference type="PDB" id="7TZF">
    <property type="method" value="EM"/>
    <property type="resolution" value="2.40 A"/>
    <property type="chains" value="P=38-74"/>
</dbReference>
<dbReference type="PDBsum" id="2KJ7"/>
<dbReference type="PDBsum" id="7TYF"/>
<dbReference type="PDBsum" id="7TYI"/>
<dbReference type="PDBsum" id="7TYL"/>
<dbReference type="PDBsum" id="7TYX"/>
<dbReference type="PDBsum" id="7TZF"/>
<dbReference type="BMRB" id="P12969"/>
<dbReference type="EMDB" id="EMD-26178"/>
<dbReference type="EMDB" id="EMD-26180"/>
<dbReference type="EMDB" id="EMD-26184"/>
<dbReference type="EMDB" id="EMD-26197"/>
<dbReference type="EMDB" id="EMD-26208"/>
<dbReference type="SMR" id="P12969"/>
<dbReference type="BioGRID" id="246637">
    <property type="interactions" value="1"/>
</dbReference>
<dbReference type="STRING" id="10116.ENSRNOP00000016614"/>
<dbReference type="PhosphoSitePlus" id="P12969"/>
<dbReference type="PaxDb" id="10116-ENSRNOP00000016614"/>
<dbReference type="Ensembl" id="ENSRNOT00000016614.5">
    <property type="protein sequence ID" value="ENSRNOP00000016614.1"/>
    <property type="gene ID" value="ENSRNOG00000012417.5"/>
</dbReference>
<dbReference type="GeneID" id="24476"/>
<dbReference type="KEGG" id="rno:24476"/>
<dbReference type="UCSC" id="RGD:2854">
    <property type="organism name" value="rat"/>
</dbReference>
<dbReference type="AGR" id="RGD:2854"/>
<dbReference type="CTD" id="3375"/>
<dbReference type="RGD" id="2854">
    <property type="gene designation" value="Iapp"/>
</dbReference>
<dbReference type="eggNOG" id="ENOG502S4AQ">
    <property type="taxonomic scope" value="Eukaryota"/>
</dbReference>
<dbReference type="GeneTree" id="ENSGT00510000048671"/>
<dbReference type="HOGENOM" id="CLU_189304_0_0_1"/>
<dbReference type="InParanoid" id="P12969"/>
<dbReference type="OMA" id="CATQRLT"/>
<dbReference type="OrthoDB" id="9898100at2759"/>
<dbReference type="PhylomeDB" id="P12969"/>
<dbReference type="TreeFam" id="TF330783"/>
<dbReference type="Reactome" id="R-RNO-419812">
    <property type="pathway name" value="Calcitonin-like ligand receptors"/>
</dbReference>
<dbReference type="EvolutionaryTrace" id="P12969"/>
<dbReference type="PRO" id="PR:P12969"/>
<dbReference type="Proteomes" id="UP000002494">
    <property type="component" value="Chromosome 4"/>
</dbReference>
<dbReference type="Bgee" id="ENSRNOG00000012417">
    <property type="expression patterns" value="Expressed in pancreas and 7 other cell types or tissues"/>
</dbReference>
<dbReference type="GO" id="GO:0005615">
    <property type="term" value="C:extracellular space"/>
    <property type="evidence" value="ECO:0000266"/>
    <property type="project" value="RGD"/>
</dbReference>
<dbReference type="GO" id="GO:0043025">
    <property type="term" value="C:neuronal cell body"/>
    <property type="evidence" value="ECO:0007669"/>
    <property type="project" value="Ensembl"/>
</dbReference>
<dbReference type="GO" id="GO:0030141">
    <property type="term" value="C:secretory granule"/>
    <property type="evidence" value="ECO:0000304"/>
    <property type="project" value="RGD"/>
</dbReference>
<dbReference type="GO" id="GO:0005179">
    <property type="term" value="F:hormone activity"/>
    <property type="evidence" value="ECO:0000314"/>
    <property type="project" value="UniProtKB"/>
</dbReference>
<dbReference type="GO" id="GO:0042802">
    <property type="term" value="F:identical protein binding"/>
    <property type="evidence" value="ECO:0000266"/>
    <property type="project" value="RGD"/>
</dbReference>
<dbReference type="GO" id="GO:0008289">
    <property type="term" value="F:lipid binding"/>
    <property type="evidence" value="ECO:0000266"/>
    <property type="project" value="RGD"/>
</dbReference>
<dbReference type="GO" id="GO:0048018">
    <property type="term" value="F:receptor ligand activity"/>
    <property type="evidence" value="ECO:0000314"/>
    <property type="project" value="UniProtKB"/>
</dbReference>
<dbReference type="GO" id="GO:0005102">
    <property type="term" value="F:signaling receptor binding"/>
    <property type="evidence" value="ECO:0000266"/>
    <property type="project" value="RGD"/>
</dbReference>
<dbReference type="GO" id="GO:0150059">
    <property type="term" value="P:amylin receptor 1 signaling pathway"/>
    <property type="evidence" value="ECO:0000266"/>
    <property type="project" value="RGD"/>
</dbReference>
<dbReference type="GO" id="GO:0150060">
    <property type="term" value="P:amylin receptor 2 signaling pathway"/>
    <property type="evidence" value="ECO:0000266"/>
    <property type="project" value="RGD"/>
</dbReference>
<dbReference type="GO" id="GO:0150061">
    <property type="term" value="P:amylin receptor 3 signaling pathway"/>
    <property type="evidence" value="ECO:0000266"/>
    <property type="project" value="RGD"/>
</dbReference>
<dbReference type="GO" id="GO:0097647">
    <property type="term" value="P:amylin receptor signaling pathway"/>
    <property type="evidence" value="ECO:0000314"/>
    <property type="project" value="UniProtKB"/>
</dbReference>
<dbReference type="GO" id="GO:0045453">
    <property type="term" value="P:bone resorption"/>
    <property type="evidence" value="ECO:0000266"/>
    <property type="project" value="RGD"/>
</dbReference>
<dbReference type="GO" id="GO:0042755">
    <property type="term" value="P:eating behavior"/>
    <property type="evidence" value="ECO:0000315"/>
    <property type="project" value="RGD"/>
</dbReference>
<dbReference type="GO" id="GO:0006006">
    <property type="term" value="P:glucose metabolic process"/>
    <property type="evidence" value="ECO:0000304"/>
    <property type="project" value="RGD"/>
</dbReference>
<dbReference type="GO" id="GO:0045779">
    <property type="term" value="P:negative regulation of bone resorption"/>
    <property type="evidence" value="ECO:0000266"/>
    <property type="project" value="RGD"/>
</dbReference>
<dbReference type="GO" id="GO:0045671">
    <property type="term" value="P:negative regulation of osteoclast differentiation"/>
    <property type="evidence" value="ECO:0000266"/>
    <property type="project" value="RGD"/>
</dbReference>
<dbReference type="GO" id="GO:0030316">
    <property type="term" value="P:osteoclast differentiation"/>
    <property type="evidence" value="ECO:0000266"/>
    <property type="project" value="RGD"/>
</dbReference>
<dbReference type="GO" id="GO:0050850">
    <property type="term" value="P:positive regulation of calcium-mediated signaling"/>
    <property type="evidence" value="ECO:0000266"/>
    <property type="project" value="RGD"/>
</dbReference>
<dbReference type="GO" id="GO:0141163">
    <property type="term" value="P:positive regulation of cAMP/PKA signal transduction"/>
    <property type="evidence" value="ECO:0000266"/>
    <property type="project" value="RGD"/>
</dbReference>
<dbReference type="GO" id="GO:0019233">
    <property type="term" value="P:sensory perception of pain"/>
    <property type="evidence" value="ECO:0000266"/>
    <property type="project" value="RGD"/>
</dbReference>
<dbReference type="Gene3D" id="6.10.250.2190">
    <property type="match status" value="1"/>
</dbReference>
<dbReference type="InterPro" id="IPR021117">
    <property type="entry name" value="Calcitonin-like"/>
</dbReference>
<dbReference type="InterPro" id="IPR021116">
    <property type="entry name" value="Calcitonin/adrenomedullin"/>
</dbReference>
<dbReference type="InterPro" id="IPR018360">
    <property type="entry name" value="Calcitonin_CS"/>
</dbReference>
<dbReference type="InterPro" id="IPR001693">
    <property type="entry name" value="Calcitonin_peptide-like"/>
</dbReference>
<dbReference type="InterPro" id="IPR000443">
    <property type="entry name" value="IAPP"/>
</dbReference>
<dbReference type="PANTHER" id="PTHR10505">
    <property type="entry name" value="CALCITONIN-RELATED"/>
    <property type="match status" value="1"/>
</dbReference>
<dbReference type="PANTHER" id="PTHR10505:SF4">
    <property type="entry name" value="ISLET AMYLOID POLYPEPTIDE"/>
    <property type="match status" value="1"/>
</dbReference>
<dbReference type="Pfam" id="PF00214">
    <property type="entry name" value="Calc_CGRP_IAPP"/>
    <property type="match status" value="1"/>
</dbReference>
<dbReference type="PRINTS" id="PR00818">
    <property type="entry name" value="ISLETAMYLOID"/>
</dbReference>
<dbReference type="SMART" id="SM00113">
    <property type="entry name" value="CALCITONIN"/>
    <property type="match status" value="1"/>
</dbReference>
<dbReference type="PROSITE" id="PS00258">
    <property type="entry name" value="CALCITONIN"/>
    <property type="match status" value="1"/>
</dbReference>
<proteinExistence type="evidence at protein level"/>
<reference key="1">
    <citation type="journal article" date="1989" name="Proc. Natl. Acad. Sci. U.S.A.">
        <title>Conservation of the sequence of islet amyloid polypeptide in five mammals is consistent with its putative role as an islet hormone.</title>
        <authorList>
            <person name="Nishi M."/>
            <person name="Chan S.J."/>
            <person name="Nagamatsu S."/>
            <person name="Bell G.I."/>
            <person name="Steiner D.F."/>
        </authorList>
    </citation>
    <scope>NUCLEOTIDE SEQUENCE [MRNA]</scope>
</reference>
<reference key="2">
    <citation type="journal article" date="1989" name="Proc. Natl. Acad. Sci. U.S.A.">
        <title>Rat amylin: cloning and tissue-specific expression in pancreatic islets.</title>
        <authorList>
            <person name="Leffert J.D."/>
            <person name="Newgard C.B."/>
            <person name="Okamoto H."/>
            <person name="Milburn J.L."/>
            <person name="Luskey K.L."/>
        </authorList>
    </citation>
    <scope>NUCLEOTIDE SEQUENCE [MRNA]</scope>
</reference>
<reference key="3">
    <citation type="journal article" date="1990" name="Biochim. Biophys. Acta">
        <title>Islet amyloid polypeptide: structure and upstream sequences of the IAPP gene in rat and man.</title>
        <authorList>
            <person name="van Mansfeld A.D.M."/>
            <person name="Mosselman S."/>
            <person name="Hoeppener J.W.M."/>
            <person name="Zandberg J."/>
            <person name="van Teeffelen H.A.A.M."/>
            <person name="Baas P.D."/>
            <person name="Lips C.J.M."/>
            <person name="Jansz H.S."/>
        </authorList>
    </citation>
    <scope>NUCLEOTIDE SEQUENCE [GENOMIC DNA]</scope>
    <source>
        <strain>WAP</strain>
        <tissue>Liver</tissue>
    </source>
</reference>
<reference key="4">
    <citation type="journal article" date="1989" name="Biochem. Biophys. Res. Commun.">
        <title>Isolation and sequence determination of rat islet amyloid polypeptide.</title>
        <authorList>
            <person name="Asai J."/>
            <person name="Nakazato M."/>
            <person name="Kangawa K."/>
            <person name="Matsukura S."/>
            <person name="Matsuo H."/>
        </authorList>
    </citation>
    <scope>PROTEIN SEQUENCE OF 38-74</scope>
    <scope>AMIDATION AT TYR-74</scope>
</reference>
<reference key="5">
    <citation type="journal article" date="1990" name="Biochem. Biophys. Res. Commun.">
        <title>Regional distribution and molecular forms of rat islet amyloid polypeptide.</title>
        <authorList>
            <person name="Asai J."/>
            <person name="Nakazato M."/>
            <person name="Miyazato M."/>
            <person name="Kangawa K."/>
            <person name="Matsuo H."/>
            <person name="Matsukura S."/>
        </authorList>
    </citation>
    <scope>PROTEIN SEQUENCE OF 38-74</scope>
</reference>
<reference key="6">
    <citation type="journal article" date="1989" name="FEBS Lett.">
        <title>Sequence divergence in a specific region of islet amyloid polypeptide (IAPP) explains differences in islet amyloid formation between species.</title>
        <authorList>
            <person name="Betsholtz C."/>
            <person name="Christmansson L."/>
            <person name="Engstroem U."/>
            <person name="Rorsman F."/>
            <person name="Svensson V."/>
            <person name="Johnson K.H."/>
            <person name="Westermark P."/>
        </authorList>
    </citation>
    <scope>NUCLEOTIDE SEQUENCE [MRNA] OF 38-74</scope>
</reference>
<reference key="7">
    <citation type="journal article" date="2009" name="PLoS Comput. Biol.">
        <title>Amyloidogenesis abolished by proline substitutions but enhanced by lipid binding.</title>
        <authorList>
            <person name="Jiang P."/>
            <person name="Xu W."/>
            <person name="Mu Y."/>
        </authorList>
    </citation>
    <scope>DOMAIN</scope>
</reference>
<reference key="8">
    <citation type="journal article" date="2009" name="J. Am. Chem. Soc.">
        <title>Three-dimensional structure and orientation of rat islet amyloid polypeptide protein in a membrane environment by solution NMR spectroscopy.</title>
        <authorList>
            <person name="Nanga R.P."/>
            <person name="Brender J.R."/>
            <person name="Xu J."/>
            <person name="Hartman K."/>
            <person name="Subramanian V."/>
            <person name="Ramamoorthy A."/>
        </authorList>
    </citation>
    <scope>STRUCTURE BY NMR OF 38-74</scope>
    <scope>DISULFIDE BOND</scope>
</reference>
<reference evidence="12 13 14 15 16" key="9">
    <citation type="journal article" date="2022" name="Science">
        <title>A structural basis for amylin receptor phenotype.</title>
        <authorList>
            <person name="Cao J."/>
            <person name="Belousoff M.J."/>
            <person name="Liang Y.L."/>
            <person name="Johnson R.M."/>
            <person name="Josephs T.M."/>
            <person name="Fletcher M.M."/>
            <person name="Christopoulos A."/>
            <person name="Hay D.L."/>
            <person name="Danev R."/>
            <person name="Wootten D."/>
            <person name="Sexton P.M."/>
        </authorList>
    </citation>
    <scope>STRUCTURE BY ELECTRON MICROSCOPY (2.20 ANGSTROMS) OF 38-74 IN COMPLEX WITH CALCR; RAMP1; RAMP2; RAMP3 AND G PROTEIN</scope>
    <scope>DISULFIDE BOND</scope>
    <scope>FUNCTION</scope>
</reference>
<comment type="function">
    <text evidence="1 6">Amylin/IAPP is a glucoregulatory peptide hormone that plays an important role in the regulation of energy homeostasis (By similarity). Selectively inhibits insulin-stimulated glucose utilization and glycogen deposition in muscle, while not affecting adipocyte glucose metabolism. IAPP function is mediated by the CALCR-RAMPs (AMYRs) receptor complexes (PubMed:35324283). Amylin can also bind CALCR receptor in the absence of RAMPs, although it is more selective for AMYRs (PubMed:35324283).</text>
</comment>
<comment type="subunit">
    <text evidence="1">Can form homodimers (By similarity). Interacts with IDE and INS (By similarity). Interaction with INS inhibits homodimerization and fibril formation (By similarity).</text>
</comment>
<comment type="subcellular location">
    <subcellularLocation>
        <location evidence="1">Secreted</location>
    </subcellularLocation>
</comment>
<comment type="tissue specificity">
    <text>Abundant in the islets of Langerhans but is not present in the brain or seven other tissues examined.</text>
</comment>
<comment type="domain">
    <text evidence="3">The mature protein is largely unstructured in the absence of a cognate ligand, but contrary to the human protein, it does not easily form fibrillar aggregates.</text>
</comment>
<comment type="similarity">
    <text evidence="10">Belongs to the calcitonin family.</text>
</comment>
<name>IAPP_RAT</name>
<accession>P12969</accession>
<feature type="signal peptide" evidence="2">
    <location>
        <begin position="1"/>
        <end position="23"/>
    </location>
</feature>
<feature type="propeptide" id="PRO_0000004121">
    <location>
        <begin position="24"/>
        <end position="35"/>
    </location>
</feature>
<feature type="peptide" id="PRO_0000004122" description="Islet amyloid polypeptide">
    <location>
        <begin position="38"/>
        <end position="74"/>
    </location>
</feature>
<feature type="propeptide" id="PRO_0000004123">
    <location>
        <begin position="78"/>
        <end position="93"/>
    </location>
</feature>
<feature type="modified residue" description="Tyrosine amide" evidence="5">
    <location>
        <position position="74"/>
    </location>
</feature>
<feature type="disulfide bond" evidence="4 6">
    <location>
        <begin position="39"/>
        <end position="44"/>
    </location>
</feature>
<feature type="helix" evidence="17">
    <location>
        <begin position="42"/>
        <end position="44"/>
    </location>
</feature>
<feature type="helix" evidence="17">
    <location>
        <begin position="45"/>
        <end position="55"/>
    </location>
</feature>
<feature type="strand" evidence="19">
    <location>
        <begin position="57"/>
        <end position="60"/>
    </location>
</feature>
<feature type="strand" evidence="18">
    <location>
        <begin position="70"/>
        <end position="72"/>
    </location>
</feature>
<sequence>MRCISRLPAVLLILSVALGHLRATPVGSGTNPQVDKRKCNTATCATQRLANFLVRSSNNLGPVLPPTNVGSNTYGKRNVAEDPNRESLDFLLL</sequence>
<gene>
    <name evidence="11" type="primary">Iapp</name>
</gene>
<protein>
    <recommendedName>
        <fullName evidence="9">Islet amyloid polypeptide</fullName>
        <shortName evidence="8">IAPP</shortName>
    </recommendedName>
    <alternativeName>
        <fullName evidence="7">Amylin</fullName>
    </alternativeName>
    <alternativeName>
        <fullName evidence="1">Diabetes-associated peptide</fullName>
        <shortName>DAP</shortName>
    </alternativeName>
</protein>